<gene>
    <name evidence="1" type="primary">betB</name>
    <name type="ordered locus">Smal_1833</name>
</gene>
<proteinExistence type="inferred from homology"/>
<feature type="chain" id="PRO_1000133959" description="Betaine aldehyde dehydrogenase">
    <location>
        <begin position="1"/>
        <end position="490"/>
    </location>
</feature>
<feature type="active site" description="Charge relay system" evidence="1">
    <location>
        <position position="162"/>
    </location>
</feature>
<feature type="active site" description="Proton acceptor" evidence="1">
    <location>
        <position position="252"/>
    </location>
</feature>
<feature type="active site" description="Nucleophile" evidence="1">
    <location>
        <position position="286"/>
    </location>
</feature>
<feature type="active site" description="Charge relay system" evidence="1">
    <location>
        <position position="464"/>
    </location>
</feature>
<feature type="binding site" evidence="1">
    <location>
        <position position="26"/>
    </location>
    <ligand>
        <name>K(+)</name>
        <dbReference type="ChEBI" id="CHEBI:29103"/>
        <label>1</label>
    </ligand>
</feature>
<feature type="binding site" evidence="1">
    <location>
        <position position="93"/>
    </location>
    <ligand>
        <name>K(+)</name>
        <dbReference type="ChEBI" id="CHEBI:29103"/>
        <label>1</label>
    </ligand>
</feature>
<feature type="binding site" evidence="1">
    <location>
        <begin position="150"/>
        <end position="152"/>
    </location>
    <ligand>
        <name>NAD(+)</name>
        <dbReference type="ChEBI" id="CHEBI:57540"/>
    </ligand>
</feature>
<feature type="binding site" evidence="1">
    <location>
        <begin position="176"/>
        <end position="179"/>
    </location>
    <ligand>
        <name>NAD(+)</name>
        <dbReference type="ChEBI" id="CHEBI:57540"/>
    </ligand>
</feature>
<feature type="binding site" evidence="1">
    <location>
        <position position="180"/>
    </location>
    <ligand>
        <name>K(+)</name>
        <dbReference type="ChEBI" id="CHEBI:29103"/>
        <label>1</label>
    </ligand>
</feature>
<feature type="binding site" evidence="1">
    <location>
        <begin position="230"/>
        <end position="233"/>
    </location>
    <ligand>
        <name>NAD(+)</name>
        <dbReference type="ChEBI" id="CHEBI:57540"/>
    </ligand>
</feature>
<feature type="binding site" evidence="1">
    <location>
        <position position="246"/>
    </location>
    <ligand>
        <name>K(+)</name>
        <dbReference type="ChEBI" id="CHEBI:29103"/>
        <label>2</label>
    </ligand>
</feature>
<feature type="binding site" evidence="1">
    <location>
        <position position="254"/>
    </location>
    <ligand>
        <name>NAD(+)</name>
        <dbReference type="ChEBI" id="CHEBI:57540"/>
    </ligand>
</feature>
<feature type="binding site" description="covalent" evidence="1">
    <location>
        <position position="286"/>
    </location>
    <ligand>
        <name>NAD(+)</name>
        <dbReference type="ChEBI" id="CHEBI:57540"/>
    </ligand>
</feature>
<feature type="binding site" evidence="1">
    <location>
        <position position="387"/>
    </location>
    <ligand>
        <name>NAD(+)</name>
        <dbReference type="ChEBI" id="CHEBI:57540"/>
    </ligand>
</feature>
<feature type="binding site" evidence="1">
    <location>
        <position position="457"/>
    </location>
    <ligand>
        <name>K(+)</name>
        <dbReference type="ChEBI" id="CHEBI:29103"/>
        <label>2</label>
    </ligand>
</feature>
<feature type="binding site" evidence="1">
    <location>
        <position position="460"/>
    </location>
    <ligand>
        <name>K(+)</name>
        <dbReference type="ChEBI" id="CHEBI:29103"/>
        <label>2</label>
    </ligand>
</feature>
<feature type="site" description="Seems to be a necessary countercharge to the potassium cations" evidence="1">
    <location>
        <position position="248"/>
    </location>
</feature>
<feature type="modified residue" description="Cysteine sulfenic acid (-SOH)" evidence="1">
    <location>
        <position position="286"/>
    </location>
</feature>
<reference key="1">
    <citation type="submission" date="2008-06" db="EMBL/GenBank/DDBJ databases">
        <title>Complete sequence of Stenotrophomonas maltophilia R551-3.</title>
        <authorList>
            <consortium name="US DOE Joint Genome Institute"/>
            <person name="Lucas S."/>
            <person name="Copeland A."/>
            <person name="Lapidus A."/>
            <person name="Glavina del Rio T."/>
            <person name="Dalin E."/>
            <person name="Tice H."/>
            <person name="Pitluck S."/>
            <person name="Chain P."/>
            <person name="Malfatti S."/>
            <person name="Shin M."/>
            <person name="Vergez L."/>
            <person name="Lang D."/>
            <person name="Schmutz J."/>
            <person name="Larimer F."/>
            <person name="Land M."/>
            <person name="Hauser L."/>
            <person name="Kyrpides N."/>
            <person name="Mikhailova N."/>
            <person name="Taghavi S."/>
            <person name="Monchy S."/>
            <person name="Newman L."/>
            <person name="Vangronsveld J."/>
            <person name="van der Lelie D."/>
            <person name="Richardson P."/>
        </authorList>
    </citation>
    <scope>NUCLEOTIDE SEQUENCE [LARGE SCALE GENOMIC DNA]</scope>
    <source>
        <strain>R551-3</strain>
    </source>
</reference>
<keyword id="KW-0479">Metal-binding</keyword>
<keyword id="KW-0520">NAD</keyword>
<keyword id="KW-0521">NADP</keyword>
<keyword id="KW-0558">Oxidation</keyword>
<keyword id="KW-0560">Oxidoreductase</keyword>
<keyword id="KW-0630">Potassium</keyword>
<organism>
    <name type="scientific">Stenotrophomonas maltophilia (strain R551-3)</name>
    <dbReference type="NCBI Taxonomy" id="391008"/>
    <lineage>
        <taxon>Bacteria</taxon>
        <taxon>Pseudomonadati</taxon>
        <taxon>Pseudomonadota</taxon>
        <taxon>Gammaproteobacteria</taxon>
        <taxon>Lysobacterales</taxon>
        <taxon>Lysobacteraceae</taxon>
        <taxon>Stenotrophomonas</taxon>
        <taxon>Stenotrophomonas maltophilia group</taxon>
    </lineage>
</organism>
<sequence>MTTLPVQQLYIHGQRVDATSGKTFRTVNPATGDVIAEVQVASQADVERAVQSAAEGQKVWAAMTAMERSRILRRAVEILRERNDELAHLETLDTGKALAETTTVDIVTGADVVEYYAGLATAIEGIQLPLRESSFFYTRREPLGVVAGIGAWNYPIQIAMWKSAPALAAGNAMVFKPSEVTPLTAIRLAEIYTEAGVPAGVFNVVQGPGREIGQWLTEHPVIEKISFTGGVATGKKVMASAASSSLKEVTMELGGKSPLVICDDADLDRAADIAVMANFFSSGQVCTNGTRVFVPRSMLAAFEAAVVERVKRIRIGDPMAAETNFGPLTSFPHMENVLRYIESGKAEGARLLTGGGRATEGALANGAYVLPTVFSDCRDDMTIVKEEIFGPVMSILAYDDEDEVVRRANDTTFGLAAGVVSKDVSRAHRIIHRLEAGICWINTWGESPAEMPVGGYKESGVGRENGLSTLGHYTRIKSVQVELGDYASVF</sequence>
<name>BETB_STRM5</name>
<protein>
    <recommendedName>
        <fullName evidence="1">Betaine aldehyde dehydrogenase</fullName>
        <shortName evidence="1">BADH</shortName>
        <ecNumber evidence="1">1.2.1.8</ecNumber>
    </recommendedName>
</protein>
<dbReference type="EC" id="1.2.1.8" evidence="1"/>
<dbReference type="EMBL" id="CP001111">
    <property type="protein sequence ID" value="ACF51537.1"/>
    <property type="molecule type" value="Genomic_DNA"/>
</dbReference>
<dbReference type="RefSeq" id="WP_012510943.1">
    <property type="nucleotide sequence ID" value="NC_011071.1"/>
</dbReference>
<dbReference type="SMR" id="B4SHW0"/>
<dbReference type="STRING" id="391008.Smal_1833"/>
<dbReference type="KEGG" id="smt:Smal_1833"/>
<dbReference type="eggNOG" id="COG1012">
    <property type="taxonomic scope" value="Bacteria"/>
</dbReference>
<dbReference type="HOGENOM" id="CLU_005391_0_0_6"/>
<dbReference type="OrthoDB" id="9812625at2"/>
<dbReference type="UniPathway" id="UPA00529">
    <property type="reaction ID" value="UER00386"/>
</dbReference>
<dbReference type="Proteomes" id="UP000001867">
    <property type="component" value="Chromosome"/>
</dbReference>
<dbReference type="GO" id="GO:0008802">
    <property type="term" value="F:betaine-aldehyde dehydrogenase (NAD+) activity"/>
    <property type="evidence" value="ECO:0007669"/>
    <property type="project" value="UniProtKB-UniRule"/>
</dbReference>
<dbReference type="GO" id="GO:0046872">
    <property type="term" value="F:metal ion binding"/>
    <property type="evidence" value="ECO:0007669"/>
    <property type="project" value="UniProtKB-KW"/>
</dbReference>
<dbReference type="GO" id="GO:0019285">
    <property type="term" value="P:glycine betaine biosynthetic process from choline"/>
    <property type="evidence" value="ECO:0007669"/>
    <property type="project" value="UniProtKB-UniRule"/>
</dbReference>
<dbReference type="CDD" id="cd07090">
    <property type="entry name" value="ALDH_F9_TMBADH"/>
    <property type="match status" value="1"/>
</dbReference>
<dbReference type="FunFam" id="3.40.309.10:FF:000014">
    <property type="entry name" value="NAD/NADP-dependent betaine aldehyde dehydrogenase"/>
    <property type="match status" value="1"/>
</dbReference>
<dbReference type="FunFam" id="3.40.605.10:FF:000007">
    <property type="entry name" value="NAD/NADP-dependent betaine aldehyde dehydrogenase"/>
    <property type="match status" value="1"/>
</dbReference>
<dbReference type="Gene3D" id="3.40.605.10">
    <property type="entry name" value="Aldehyde Dehydrogenase, Chain A, domain 1"/>
    <property type="match status" value="1"/>
</dbReference>
<dbReference type="Gene3D" id="3.40.309.10">
    <property type="entry name" value="Aldehyde Dehydrogenase, Chain A, domain 2"/>
    <property type="match status" value="1"/>
</dbReference>
<dbReference type="HAMAP" id="MF_00804">
    <property type="entry name" value="BADH"/>
    <property type="match status" value="1"/>
</dbReference>
<dbReference type="InterPro" id="IPR016161">
    <property type="entry name" value="Ald_DH/histidinol_DH"/>
</dbReference>
<dbReference type="InterPro" id="IPR016163">
    <property type="entry name" value="Ald_DH_C"/>
</dbReference>
<dbReference type="InterPro" id="IPR016160">
    <property type="entry name" value="Ald_DH_CS_CYS"/>
</dbReference>
<dbReference type="InterPro" id="IPR029510">
    <property type="entry name" value="Ald_DH_CS_GLU"/>
</dbReference>
<dbReference type="InterPro" id="IPR016162">
    <property type="entry name" value="Ald_DH_N"/>
</dbReference>
<dbReference type="InterPro" id="IPR015590">
    <property type="entry name" value="Aldehyde_DH_dom"/>
</dbReference>
<dbReference type="InterPro" id="IPR011264">
    <property type="entry name" value="BADH"/>
</dbReference>
<dbReference type="NCBIfam" id="TIGR01804">
    <property type="entry name" value="BADH"/>
    <property type="match status" value="1"/>
</dbReference>
<dbReference type="NCBIfam" id="NF009725">
    <property type="entry name" value="PRK13252.1"/>
    <property type="match status" value="1"/>
</dbReference>
<dbReference type="PANTHER" id="PTHR11699">
    <property type="entry name" value="ALDEHYDE DEHYDROGENASE-RELATED"/>
    <property type="match status" value="1"/>
</dbReference>
<dbReference type="Pfam" id="PF00171">
    <property type="entry name" value="Aldedh"/>
    <property type="match status" value="1"/>
</dbReference>
<dbReference type="SUPFAM" id="SSF53720">
    <property type="entry name" value="ALDH-like"/>
    <property type="match status" value="1"/>
</dbReference>
<dbReference type="PROSITE" id="PS00070">
    <property type="entry name" value="ALDEHYDE_DEHYDR_CYS"/>
    <property type="match status" value="1"/>
</dbReference>
<dbReference type="PROSITE" id="PS00687">
    <property type="entry name" value="ALDEHYDE_DEHYDR_GLU"/>
    <property type="match status" value="1"/>
</dbReference>
<accession>B4SHW0</accession>
<evidence type="ECO:0000255" key="1">
    <source>
        <dbReference type="HAMAP-Rule" id="MF_00804"/>
    </source>
</evidence>
<comment type="function">
    <text evidence="1">Involved in the biosynthesis of the osmoprotectant glycine betaine. Catalyzes the irreversible oxidation of betaine aldehyde to the corresponding acid.</text>
</comment>
<comment type="catalytic activity">
    <reaction evidence="1">
        <text>betaine aldehyde + NAD(+) + H2O = glycine betaine + NADH + 2 H(+)</text>
        <dbReference type="Rhea" id="RHEA:15305"/>
        <dbReference type="ChEBI" id="CHEBI:15377"/>
        <dbReference type="ChEBI" id="CHEBI:15378"/>
        <dbReference type="ChEBI" id="CHEBI:15710"/>
        <dbReference type="ChEBI" id="CHEBI:17750"/>
        <dbReference type="ChEBI" id="CHEBI:57540"/>
        <dbReference type="ChEBI" id="CHEBI:57945"/>
        <dbReference type="EC" id="1.2.1.8"/>
    </reaction>
    <physiologicalReaction direction="left-to-right" evidence="1">
        <dbReference type="Rhea" id="RHEA:15306"/>
    </physiologicalReaction>
</comment>
<comment type="cofactor">
    <cofactor evidence="1">
        <name>K(+)</name>
        <dbReference type="ChEBI" id="CHEBI:29103"/>
    </cofactor>
    <text evidence="1">Binds 2 potassium ions per subunit.</text>
</comment>
<comment type="pathway">
    <text evidence="1">Amine and polyamine biosynthesis; betaine biosynthesis via choline pathway; betaine from betaine aldehyde: step 1/1.</text>
</comment>
<comment type="subunit">
    <text evidence="1">Dimer of dimers.</text>
</comment>
<comment type="similarity">
    <text evidence="1">Belongs to the aldehyde dehydrogenase family.</text>
</comment>